<dbReference type="EMBL" id="BC122780">
    <property type="protein sequence ID" value="AAI22781.1"/>
    <property type="molecule type" value="mRNA"/>
</dbReference>
<dbReference type="RefSeq" id="NP_001073782.1">
    <property type="nucleotide sequence ID" value="NM_001080313.2"/>
</dbReference>
<dbReference type="SMR" id="Q05B58"/>
<dbReference type="FunCoup" id="Q05B58">
    <property type="interactions" value="1929"/>
</dbReference>
<dbReference type="STRING" id="9913.ENSBTAP00000000022"/>
<dbReference type="PaxDb" id="9913-ENSBTAP00000000022"/>
<dbReference type="GeneID" id="613720"/>
<dbReference type="KEGG" id="bta:613720"/>
<dbReference type="CTD" id="51019"/>
<dbReference type="eggNOG" id="KOG4496">
    <property type="taxonomic scope" value="Eukaryota"/>
</dbReference>
<dbReference type="InParanoid" id="Q05B58"/>
<dbReference type="OrthoDB" id="268027at2759"/>
<dbReference type="Proteomes" id="UP000009136">
    <property type="component" value="Unplaced"/>
</dbReference>
<dbReference type="GO" id="GO:0005769">
    <property type="term" value="C:early endosome"/>
    <property type="evidence" value="ECO:0007669"/>
    <property type="project" value="UniProtKB-SubCell"/>
</dbReference>
<dbReference type="GO" id="GO:0071203">
    <property type="term" value="C:WASH complex"/>
    <property type="evidence" value="ECO:0000314"/>
    <property type="project" value="UniProtKB"/>
</dbReference>
<dbReference type="GO" id="GO:0030041">
    <property type="term" value="P:actin filament polymerization"/>
    <property type="evidence" value="ECO:0000318"/>
    <property type="project" value="GO_Central"/>
</dbReference>
<dbReference type="GO" id="GO:0006887">
    <property type="term" value="P:exocytosis"/>
    <property type="evidence" value="ECO:0000318"/>
    <property type="project" value="GO_Central"/>
</dbReference>
<dbReference type="GO" id="GO:0015031">
    <property type="term" value="P:protein transport"/>
    <property type="evidence" value="ECO:0007669"/>
    <property type="project" value="UniProtKB-KW"/>
</dbReference>
<dbReference type="FunFam" id="1.20.5.110:FF:000025">
    <property type="entry name" value="Putative WASH complex subunit CCDC53"/>
    <property type="match status" value="1"/>
</dbReference>
<dbReference type="Gene3D" id="1.20.5.110">
    <property type="match status" value="1"/>
</dbReference>
<dbReference type="InterPro" id="IPR019309">
    <property type="entry name" value="WASHC3"/>
</dbReference>
<dbReference type="PANTHER" id="PTHR13015">
    <property type="entry name" value="PROTEIN AD-016-RELATED"/>
    <property type="match status" value="1"/>
</dbReference>
<dbReference type="PANTHER" id="PTHR13015:SF0">
    <property type="entry name" value="WASH COMPLEX SUBUNIT 3"/>
    <property type="match status" value="1"/>
</dbReference>
<dbReference type="Pfam" id="PF10152">
    <property type="entry name" value="CCDC53"/>
    <property type="match status" value="1"/>
</dbReference>
<gene>
    <name evidence="1" type="primary">WASHC3</name>
    <name type="synonym">CCDC53</name>
</gene>
<name>WASC3_BOVIN</name>
<proteinExistence type="evidence at protein level"/>
<feature type="chain" id="PRO_0000390954" description="WASH complex subunit 3">
    <location>
        <begin position="1"/>
        <end position="194"/>
    </location>
</feature>
<feature type="region of interest" description="Disordered" evidence="3">
    <location>
        <begin position="98"/>
        <end position="125"/>
    </location>
</feature>
<feature type="region of interest" description="Disordered" evidence="3">
    <location>
        <begin position="158"/>
        <end position="194"/>
    </location>
</feature>
<feature type="coiled-coil region" evidence="2">
    <location>
        <begin position="46"/>
        <end position="74"/>
    </location>
</feature>
<feature type="compositionally biased region" description="Polar residues" evidence="3">
    <location>
        <begin position="98"/>
        <end position="123"/>
    </location>
</feature>
<feature type="modified residue" description="N-acetylmethionine" evidence="1">
    <location>
        <position position="1"/>
    </location>
</feature>
<reference key="1">
    <citation type="submission" date="2006-08" db="EMBL/GenBank/DDBJ databases">
        <authorList>
            <consortium name="NIH - Mammalian Gene Collection (MGC) project"/>
        </authorList>
    </citation>
    <scope>NUCLEOTIDE SEQUENCE [LARGE SCALE MRNA]</scope>
    <source>
        <strain>Crossbred X Angus</strain>
        <tissue>Liver</tissue>
    </source>
</reference>
<reference key="2">
    <citation type="journal article" date="2010" name="Proc. Natl. Acad. Sci. U.S.A.">
        <title>WASH and WAVE actin regulators of the Wiskott-Aldrich syndrome protein (WASP) family are controlled by analogous structurally related complexes.</title>
        <authorList>
            <person name="Jia D."/>
            <person name="Gomez T.S."/>
            <person name="Metlagel Z."/>
            <person name="Umetani J."/>
            <person name="Otwinowski Z."/>
            <person name="Rosen M.K."/>
            <person name="Billadeau D.D."/>
        </authorList>
    </citation>
    <scope>IDENTIFICATION IN THE WASH COMPLEX</scope>
</reference>
<keyword id="KW-0007">Acetylation</keyword>
<keyword id="KW-0175">Coiled coil</keyword>
<keyword id="KW-0967">Endosome</keyword>
<keyword id="KW-0653">Protein transport</keyword>
<keyword id="KW-1185">Reference proteome</keyword>
<keyword id="KW-0813">Transport</keyword>
<evidence type="ECO:0000250" key="1">
    <source>
        <dbReference type="UniProtKB" id="Q9Y3C0"/>
    </source>
</evidence>
<evidence type="ECO:0000255" key="2"/>
<evidence type="ECO:0000256" key="3">
    <source>
        <dbReference type="SAM" id="MobiDB-lite"/>
    </source>
</evidence>
<evidence type="ECO:0000269" key="4">
    <source>
    </source>
</evidence>
<evidence type="ECO:0000305" key="5"/>
<accession>Q05B58</accession>
<sequence>MDEDGLPLMGSGIDLTKVPAIQQKRTVAFLNQFVVHTVQFLNRFSTVCEEKLADLSLRIQQIETTLNILDAKLSSIPGLDDVTFEVSPVNVTRITNGTHSEATSEQSQQNSLQDSGPQESEVTPENILTVAKDPRYARYHKMVQVGVPVMAIRNKMISEGLDPDLLERPDAPVPDGEGEKNTEESSDSESSFSD</sequence>
<comment type="function">
    <text evidence="1">Acts as a component of the WASH core complex that functions as a nucleation-promoting factor (NPF) at the surface of endosomes, where it recruits and activates the Arp2/3 complex to induce actin polymerization, playing a key role in the fission of tubules that serve as transport intermediates during endosome sorting.</text>
</comment>
<comment type="subunit">
    <text evidence="1 4">Component of the WASH core complex also described as WASH regulatory complex (SHRC) composed of WASHC1, WASHC2, WASHC3, WASHC4 and WASHC5 (PubMed:20498093). The WASH core complex associates via WASHC2 with the F-actin-capping protein dimer (formed by CAPZA1, CAPZA2 or CAPZA3 and CAPZB) in a transient or substoichiometric manner which was initially described as WASH complex.</text>
</comment>
<comment type="subcellular location">
    <subcellularLocation>
        <location evidence="5">Early endosome</location>
    </subcellularLocation>
</comment>
<comment type="similarity">
    <text evidence="5">Belongs to the CCDC53 family.</text>
</comment>
<organism>
    <name type="scientific">Bos taurus</name>
    <name type="common">Bovine</name>
    <dbReference type="NCBI Taxonomy" id="9913"/>
    <lineage>
        <taxon>Eukaryota</taxon>
        <taxon>Metazoa</taxon>
        <taxon>Chordata</taxon>
        <taxon>Craniata</taxon>
        <taxon>Vertebrata</taxon>
        <taxon>Euteleostomi</taxon>
        <taxon>Mammalia</taxon>
        <taxon>Eutheria</taxon>
        <taxon>Laurasiatheria</taxon>
        <taxon>Artiodactyla</taxon>
        <taxon>Ruminantia</taxon>
        <taxon>Pecora</taxon>
        <taxon>Bovidae</taxon>
        <taxon>Bovinae</taxon>
        <taxon>Bos</taxon>
    </lineage>
</organism>
<protein>
    <recommendedName>
        <fullName evidence="1">WASH complex subunit 3</fullName>
    </recommendedName>
    <alternativeName>
        <fullName>Coiled-coil domain-containing protein 53</fullName>
    </alternativeName>
</protein>